<organism>
    <name type="scientific">Mus musculus</name>
    <name type="common">Mouse</name>
    <dbReference type="NCBI Taxonomy" id="10090"/>
    <lineage>
        <taxon>Eukaryota</taxon>
        <taxon>Metazoa</taxon>
        <taxon>Chordata</taxon>
        <taxon>Craniata</taxon>
        <taxon>Vertebrata</taxon>
        <taxon>Euteleostomi</taxon>
        <taxon>Mammalia</taxon>
        <taxon>Eutheria</taxon>
        <taxon>Euarchontoglires</taxon>
        <taxon>Glires</taxon>
        <taxon>Rodentia</taxon>
        <taxon>Myomorpha</taxon>
        <taxon>Muroidea</taxon>
        <taxon>Muridae</taxon>
        <taxon>Murinae</taxon>
        <taxon>Mus</taxon>
        <taxon>Mus</taxon>
    </lineage>
</organism>
<evidence type="ECO:0000255" key="1"/>
<evidence type="ECO:0000256" key="2">
    <source>
        <dbReference type="SAM" id="MobiDB-lite"/>
    </source>
</evidence>
<evidence type="ECO:0000269" key="3">
    <source>
    </source>
</evidence>
<evidence type="ECO:0000269" key="4">
    <source>
    </source>
</evidence>
<evidence type="ECO:0000269" key="5">
    <source>
    </source>
</evidence>
<evidence type="ECO:0000305" key="6"/>
<evidence type="ECO:0000312" key="7">
    <source>
        <dbReference type="MGI" id="MGI:1890663"/>
    </source>
</evidence>
<evidence type="ECO:0007829" key="8">
    <source>
        <dbReference type="PDB" id="2JTK"/>
    </source>
</evidence>
<name>DKK2_MOUSE</name>
<sequence>MAALMRVKDSSRCLLLLAAVLMVESSQLGSSRAKLNSIKSSLGGETPAQSANRSAGMNQGLAFGGSKKGKSLGQAYPCSSDKECEVGRYCHSPHQGSSACMLCRRKKKRCHRDGMCCPGTRCNNGICIPVTESILTPHIPALDGTRHRDRNHGHYSNHDLGWQNLGRPHSKMPHIKGHEGDPCLRSSDCIDGFCCARHFWTKICKPVLHQGEVCTKQRKKGSHGLEIFQRCDCAKGLSCKVWKDATYSSKARLHVCQKI</sequence>
<dbReference type="EMBL" id="AJ243963">
    <property type="protein sequence ID" value="CAB60110.1"/>
    <property type="molecule type" value="mRNA"/>
</dbReference>
<dbReference type="EMBL" id="AK028225">
    <property type="protein sequence ID" value="BAC25824.1"/>
    <property type="molecule type" value="mRNA"/>
</dbReference>
<dbReference type="EMBL" id="AK031749">
    <property type="protein sequence ID" value="BAC27536.1"/>
    <property type="molecule type" value="mRNA"/>
</dbReference>
<dbReference type="EMBL" id="AC127260">
    <property type="status" value="NOT_ANNOTATED_CDS"/>
    <property type="molecule type" value="Genomic_DNA"/>
</dbReference>
<dbReference type="EMBL" id="CH466532">
    <property type="protein sequence ID" value="EDL12195.1"/>
    <property type="molecule type" value="Genomic_DNA"/>
</dbReference>
<dbReference type="EMBL" id="BC096448">
    <property type="protein sequence ID" value="AAH96448.1"/>
    <property type="molecule type" value="mRNA"/>
</dbReference>
<dbReference type="CCDS" id="CCDS17844.1"/>
<dbReference type="RefSeq" id="NP_064661.2">
    <property type="nucleotide sequence ID" value="NM_020265.4"/>
</dbReference>
<dbReference type="PDB" id="2JTK">
    <property type="method" value="NMR"/>
    <property type="chains" value="A=172-259"/>
</dbReference>
<dbReference type="PDBsum" id="2JTK"/>
<dbReference type="SMR" id="Q9QYZ8"/>
<dbReference type="FunCoup" id="Q9QYZ8">
    <property type="interactions" value="698"/>
</dbReference>
<dbReference type="STRING" id="10090.ENSMUSP00000029665"/>
<dbReference type="GlyCosmos" id="Q9QYZ8">
    <property type="glycosylation" value="1 site, No reported glycans"/>
</dbReference>
<dbReference type="GlyGen" id="Q9QYZ8">
    <property type="glycosylation" value="1 site"/>
</dbReference>
<dbReference type="PhosphoSitePlus" id="Q9QYZ8"/>
<dbReference type="PaxDb" id="10090-ENSMUSP00000029665"/>
<dbReference type="ProteomicsDB" id="279718"/>
<dbReference type="Antibodypedia" id="4050">
    <property type="antibodies" value="323 antibodies from 38 providers"/>
</dbReference>
<dbReference type="DNASU" id="56811"/>
<dbReference type="Ensembl" id="ENSMUST00000029665.7">
    <property type="protein sequence ID" value="ENSMUSP00000029665.6"/>
    <property type="gene ID" value="ENSMUSG00000028031.7"/>
</dbReference>
<dbReference type="GeneID" id="56811"/>
<dbReference type="KEGG" id="mmu:56811"/>
<dbReference type="UCSC" id="uc008rjw.2">
    <property type="organism name" value="mouse"/>
</dbReference>
<dbReference type="AGR" id="MGI:1890663"/>
<dbReference type="CTD" id="27123"/>
<dbReference type="MGI" id="MGI:1890663">
    <property type="gene designation" value="Dkk2"/>
</dbReference>
<dbReference type="VEuPathDB" id="HostDB:ENSMUSG00000028031"/>
<dbReference type="eggNOG" id="KOG1218">
    <property type="taxonomic scope" value="Eukaryota"/>
</dbReference>
<dbReference type="GeneTree" id="ENSGT00940000162188"/>
<dbReference type="HOGENOM" id="CLU_080459_2_0_1"/>
<dbReference type="InParanoid" id="Q9QYZ8"/>
<dbReference type="OMA" id="THAKGHE"/>
<dbReference type="OrthoDB" id="4321958at2759"/>
<dbReference type="PhylomeDB" id="Q9QYZ8"/>
<dbReference type="TreeFam" id="TF330916"/>
<dbReference type="Reactome" id="R-MMU-3772470">
    <property type="pathway name" value="Negative regulation of TCF-dependent signaling by WNT ligand antagonists"/>
</dbReference>
<dbReference type="BioGRID-ORCS" id="56811">
    <property type="hits" value="1 hit in 76 CRISPR screens"/>
</dbReference>
<dbReference type="ChiTaRS" id="Dkk2">
    <property type="organism name" value="mouse"/>
</dbReference>
<dbReference type="EvolutionaryTrace" id="Q9QYZ8"/>
<dbReference type="PRO" id="PR:Q9QYZ8"/>
<dbReference type="Proteomes" id="UP000000589">
    <property type="component" value="Chromosome 3"/>
</dbReference>
<dbReference type="RNAct" id="Q9QYZ8">
    <property type="molecule type" value="protein"/>
</dbReference>
<dbReference type="Bgee" id="ENSMUSG00000028031">
    <property type="expression patterns" value="Expressed in vestibular membrane of cochlear duct and 184 other cell types or tissues"/>
</dbReference>
<dbReference type="GO" id="GO:0005576">
    <property type="term" value="C:extracellular region"/>
    <property type="evidence" value="ECO:0000250"/>
    <property type="project" value="MGI"/>
</dbReference>
<dbReference type="GO" id="GO:0005615">
    <property type="term" value="C:extracellular space"/>
    <property type="evidence" value="ECO:0007669"/>
    <property type="project" value="Ensembl"/>
</dbReference>
<dbReference type="GO" id="GO:0039706">
    <property type="term" value="F:co-receptor binding"/>
    <property type="evidence" value="ECO:0000353"/>
    <property type="project" value="ParkinsonsUK-UCL"/>
</dbReference>
<dbReference type="GO" id="GO:0090090">
    <property type="term" value="P:negative regulation of canonical Wnt signaling pathway"/>
    <property type="evidence" value="ECO:0007669"/>
    <property type="project" value="Ensembl"/>
</dbReference>
<dbReference type="GO" id="GO:0030178">
    <property type="term" value="P:negative regulation of Wnt signaling pathway"/>
    <property type="evidence" value="ECO:0000314"/>
    <property type="project" value="ParkinsonsUK-UCL"/>
</dbReference>
<dbReference type="GO" id="GO:0090263">
    <property type="term" value="P:positive regulation of canonical Wnt signaling pathway"/>
    <property type="evidence" value="ECO:0007669"/>
    <property type="project" value="Ensembl"/>
</dbReference>
<dbReference type="GO" id="GO:0016055">
    <property type="term" value="P:Wnt signaling pathway"/>
    <property type="evidence" value="ECO:0007669"/>
    <property type="project" value="UniProtKB-KW"/>
</dbReference>
<dbReference type="CDD" id="cd23015">
    <property type="entry name" value="Dkk2_Cys1"/>
    <property type="match status" value="1"/>
</dbReference>
<dbReference type="CDD" id="cd23273">
    <property type="entry name" value="Dkk2_Cys2"/>
    <property type="match status" value="1"/>
</dbReference>
<dbReference type="FunFam" id="2.10.80.10:FF:000001">
    <property type="entry name" value="Dickkopf WNT-signaling pathway inhibitor 2"/>
    <property type="match status" value="1"/>
</dbReference>
<dbReference type="Gene3D" id="2.10.80.10">
    <property type="entry name" value="Lipase, subunit A"/>
    <property type="match status" value="1"/>
</dbReference>
<dbReference type="InterPro" id="IPR006796">
    <property type="entry name" value="Dickkopf_N"/>
</dbReference>
<dbReference type="InterPro" id="IPR048500">
    <property type="entry name" value="DIKK1/2/4_C-subdom1"/>
</dbReference>
<dbReference type="InterPro" id="IPR048499">
    <property type="entry name" value="DIKK1/2/4_C-subdom2"/>
</dbReference>
<dbReference type="InterPro" id="IPR039863">
    <property type="entry name" value="DKK1-4"/>
</dbReference>
<dbReference type="InterPro" id="IPR047303">
    <property type="entry name" value="Dkk2_Cys1"/>
</dbReference>
<dbReference type="InterPro" id="IPR047302">
    <property type="entry name" value="Dkk2_Cys2"/>
</dbReference>
<dbReference type="PANTHER" id="PTHR12113:SF12">
    <property type="entry name" value="DICKKOPF-RELATED PROTEIN 2"/>
    <property type="match status" value="1"/>
</dbReference>
<dbReference type="PANTHER" id="PTHR12113">
    <property type="entry name" value="DICKKOPF3-LIKE 3"/>
    <property type="match status" value="1"/>
</dbReference>
<dbReference type="Pfam" id="PF04706">
    <property type="entry name" value="Dickkopf_N"/>
    <property type="match status" value="1"/>
</dbReference>
<dbReference type="Pfam" id="PF21481">
    <property type="entry name" value="DIKK1-2-4_C-subdom1"/>
    <property type="match status" value="1"/>
</dbReference>
<dbReference type="Pfam" id="PF21479">
    <property type="entry name" value="DIKK1-2-4_C-subdom2"/>
    <property type="match status" value="1"/>
</dbReference>
<gene>
    <name evidence="7" type="primary">Dkk2</name>
</gene>
<feature type="signal peptide" evidence="1">
    <location>
        <begin position="1"/>
        <end position="33"/>
    </location>
</feature>
<feature type="chain" id="PRO_0000007221" description="Dickkopf-related protein 2">
    <location>
        <begin position="34"/>
        <end position="259"/>
    </location>
</feature>
<feature type="region of interest" description="Disordered" evidence="2">
    <location>
        <begin position="42"/>
        <end position="70"/>
    </location>
</feature>
<feature type="region of interest" description="DKK-type Cys-1">
    <location>
        <begin position="78"/>
        <end position="127"/>
    </location>
</feature>
<feature type="region of interest" description="DKK-type Cys-2">
    <location>
        <begin position="183"/>
        <end position="256"/>
    </location>
</feature>
<feature type="compositionally biased region" description="Polar residues" evidence="2">
    <location>
        <begin position="47"/>
        <end position="57"/>
    </location>
</feature>
<feature type="glycosylation site" description="N-linked (GlcNAc...) asparagine" evidence="1">
    <location>
        <position position="52"/>
    </location>
</feature>
<feature type="disulfide bond" evidence="3">
    <location>
        <begin position="183"/>
        <end position="195"/>
    </location>
</feature>
<feature type="disulfide bond" evidence="3">
    <location>
        <begin position="189"/>
        <end position="204"/>
    </location>
</feature>
<feature type="disulfide bond" evidence="3">
    <location>
        <begin position="194"/>
        <end position="231"/>
    </location>
</feature>
<feature type="disulfide bond" evidence="3">
    <location>
        <begin position="214"/>
        <end position="239"/>
    </location>
</feature>
<feature type="disulfide bond" evidence="3">
    <location>
        <begin position="233"/>
        <end position="256"/>
    </location>
</feature>
<feature type="sequence conflict" description="In Ref. 1; CAB60110." evidence="6" ref="1">
    <original>L</original>
    <variation>P</variation>
    <location>
        <position position="35"/>
    </location>
</feature>
<feature type="strand" evidence="8">
    <location>
        <begin position="178"/>
        <end position="180"/>
    </location>
</feature>
<feature type="strand" evidence="8">
    <location>
        <begin position="193"/>
        <end position="196"/>
    </location>
</feature>
<feature type="strand" evidence="8">
    <location>
        <begin position="199"/>
        <end position="201"/>
    </location>
</feature>
<feature type="strand" evidence="8">
    <location>
        <begin position="203"/>
        <end position="206"/>
    </location>
</feature>
<feature type="strand" evidence="8">
    <location>
        <begin position="212"/>
        <end position="214"/>
    </location>
</feature>
<feature type="strand" evidence="8">
    <location>
        <begin position="222"/>
        <end position="224"/>
    </location>
</feature>
<feature type="strand" evidence="8">
    <location>
        <begin position="237"/>
        <end position="241"/>
    </location>
</feature>
<feature type="helix" evidence="8">
    <location>
        <begin position="247"/>
        <end position="249"/>
    </location>
</feature>
<feature type="strand" evidence="8">
    <location>
        <begin position="254"/>
        <end position="258"/>
    </location>
</feature>
<proteinExistence type="evidence at protein level"/>
<keyword id="KW-0002">3D-structure</keyword>
<keyword id="KW-0217">Developmental protein</keyword>
<keyword id="KW-1015">Disulfide bond</keyword>
<keyword id="KW-0325">Glycoprotein</keyword>
<keyword id="KW-1185">Reference proteome</keyword>
<keyword id="KW-0964">Secreted</keyword>
<keyword id="KW-0732">Signal</keyword>
<keyword id="KW-0879">Wnt signaling pathway</keyword>
<reference key="1">
    <citation type="journal article" date="1999" name="Mech. Dev.">
        <title>Dickkopf genes are co-ordinately expressed in mesodermal lineages.</title>
        <authorList>
            <person name="Monaghan P.A."/>
            <person name="Kioschis P."/>
            <person name="Wu W."/>
            <person name="Zuniga A."/>
            <person name="Bock D."/>
            <person name="Poustka A."/>
            <person name="Delius H."/>
            <person name="Niehrs C."/>
        </authorList>
    </citation>
    <scope>NUCLEOTIDE SEQUENCE [MRNA]</scope>
</reference>
<reference key="2">
    <citation type="journal article" date="2005" name="Science">
        <title>The transcriptional landscape of the mammalian genome.</title>
        <authorList>
            <person name="Carninci P."/>
            <person name="Kasukawa T."/>
            <person name="Katayama S."/>
            <person name="Gough J."/>
            <person name="Frith M.C."/>
            <person name="Maeda N."/>
            <person name="Oyama R."/>
            <person name="Ravasi T."/>
            <person name="Lenhard B."/>
            <person name="Wells C."/>
            <person name="Kodzius R."/>
            <person name="Shimokawa K."/>
            <person name="Bajic V.B."/>
            <person name="Brenner S.E."/>
            <person name="Batalov S."/>
            <person name="Forrest A.R."/>
            <person name="Zavolan M."/>
            <person name="Davis M.J."/>
            <person name="Wilming L.G."/>
            <person name="Aidinis V."/>
            <person name="Allen J.E."/>
            <person name="Ambesi-Impiombato A."/>
            <person name="Apweiler R."/>
            <person name="Aturaliya R.N."/>
            <person name="Bailey T.L."/>
            <person name="Bansal M."/>
            <person name="Baxter L."/>
            <person name="Beisel K.W."/>
            <person name="Bersano T."/>
            <person name="Bono H."/>
            <person name="Chalk A.M."/>
            <person name="Chiu K.P."/>
            <person name="Choudhary V."/>
            <person name="Christoffels A."/>
            <person name="Clutterbuck D.R."/>
            <person name="Crowe M.L."/>
            <person name="Dalla E."/>
            <person name="Dalrymple B.P."/>
            <person name="de Bono B."/>
            <person name="Della Gatta G."/>
            <person name="di Bernardo D."/>
            <person name="Down T."/>
            <person name="Engstrom P."/>
            <person name="Fagiolini M."/>
            <person name="Faulkner G."/>
            <person name="Fletcher C.F."/>
            <person name="Fukushima T."/>
            <person name="Furuno M."/>
            <person name="Futaki S."/>
            <person name="Gariboldi M."/>
            <person name="Georgii-Hemming P."/>
            <person name="Gingeras T.R."/>
            <person name="Gojobori T."/>
            <person name="Green R.E."/>
            <person name="Gustincich S."/>
            <person name="Harbers M."/>
            <person name="Hayashi Y."/>
            <person name="Hensch T.K."/>
            <person name="Hirokawa N."/>
            <person name="Hill D."/>
            <person name="Huminiecki L."/>
            <person name="Iacono M."/>
            <person name="Ikeo K."/>
            <person name="Iwama A."/>
            <person name="Ishikawa T."/>
            <person name="Jakt M."/>
            <person name="Kanapin A."/>
            <person name="Katoh M."/>
            <person name="Kawasawa Y."/>
            <person name="Kelso J."/>
            <person name="Kitamura H."/>
            <person name="Kitano H."/>
            <person name="Kollias G."/>
            <person name="Krishnan S.P."/>
            <person name="Kruger A."/>
            <person name="Kummerfeld S.K."/>
            <person name="Kurochkin I.V."/>
            <person name="Lareau L.F."/>
            <person name="Lazarevic D."/>
            <person name="Lipovich L."/>
            <person name="Liu J."/>
            <person name="Liuni S."/>
            <person name="McWilliam S."/>
            <person name="Madan Babu M."/>
            <person name="Madera M."/>
            <person name="Marchionni L."/>
            <person name="Matsuda H."/>
            <person name="Matsuzawa S."/>
            <person name="Miki H."/>
            <person name="Mignone F."/>
            <person name="Miyake S."/>
            <person name="Morris K."/>
            <person name="Mottagui-Tabar S."/>
            <person name="Mulder N."/>
            <person name="Nakano N."/>
            <person name="Nakauchi H."/>
            <person name="Ng P."/>
            <person name="Nilsson R."/>
            <person name="Nishiguchi S."/>
            <person name="Nishikawa S."/>
            <person name="Nori F."/>
            <person name="Ohara O."/>
            <person name="Okazaki Y."/>
            <person name="Orlando V."/>
            <person name="Pang K.C."/>
            <person name="Pavan W.J."/>
            <person name="Pavesi G."/>
            <person name="Pesole G."/>
            <person name="Petrovsky N."/>
            <person name="Piazza S."/>
            <person name="Reed J."/>
            <person name="Reid J.F."/>
            <person name="Ring B.Z."/>
            <person name="Ringwald M."/>
            <person name="Rost B."/>
            <person name="Ruan Y."/>
            <person name="Salzberg S.L."/>
            <person name="Sandelin A."/>
            <person name="Schneider C."/>
            <person name="Schoenbach C."/>
            <person name="Sekiguchi K."/>
            <person name="Semple C.A."/>
            <person name="Seno S."/>
            <person name="Sessa L."/>
            <person name="Sheng Y."/>
            <person name="Shibata Y."/>
            <person name="Shimada H."/>
            <person name="Shimada K."/>
            <person name="Silva D."/>
            <person name="Sinclair B."/>
            <person name="Sperling S."/>
            <person name="Stupka E."/>
            <person name="Sugiura K."/>
            <person name="Sultana R."/>
            <person name="Takenaka Y."/>
            <person name="Taki K."/>
            <person name="Tammoja K."/>
            <person name="Tan S.L."/>
            <person name="Tang S."/>
            <person name="Taylor M.S."/>
            <person name="Tegner J."/>
            <person name="Teichmann S.A."/>
            <person name="Ueda H.R."/>
            <person name="van Nimwegen E."/>
            <person name="Verardo R."/>
            <person name="Wei C.L."/>
            <person name="Yagi K."/>
            <person name="Yamanishi H."/>
            <person name="Zabarovsky E."/>
            <person name="Zhu S."/>
            <person name="Zimmer A."/>
            <person name="Hide W."/>
            <person name="Bult C."/>
            <person name="Grimmond S.M."/>
            <person name="Teasdale R.D."/>
            <person name="Liu E.T."/>
            <person name="Brusic V."/>
            <person name="Quackenbush J."/>
            <person name="Wahlestedt C."/>
            <person name="Mattick J.S."/>
            <person name="Hume D.A."/>
            <person name="Kai C."/>
            <person name="Sasaki D."/>
            <person name="Tomaru Y."/>
            <person name="Fukuda S."/>
            <person name="Kanamori-Katayama M."/>
            <person name="Suzuki M."/>
            <person name="Aoki J."/>
            <person name="Arakawa T."/>
            <person name="Iida J."/>
            <person name="Imamura K."/>
            <person name="Itoh M."/>
            <person name="Kato T."/>
            <person name="Kawaji H."/>
            <person name="Kawagashira N."/>
            <person name="Kawashima T."/>
            <person name="Kojima M."/>
            <person name="Kondo S."/>
            <person name="Konno H."/>
            <person name="Nakano K."/>
            <person name="Ninomiya N."/>
            <person name="Nishio T."/>
            <person name="Okada M."/>
            <person name="Plessy C."/>
            <person name="Shibata K."/>
            <person name="Shiraki T."/>
            <person name="Suzuki S."/>
            <person name="Tagami M."/>
            <person name="Waki K."/>
            <person name="Watahiki A."/>
            <person name="Okamura-Oho Y."/>
            <person name="Suzuki H."/>
            <person name="Kawai J."/>
            <person name="Hayashizaki Y."/>
        </authorList>
    </citation>
    <scope>NUCLEOTIDE SEQUENCE [LARGE SCALE MRNA]</scope>
    <source>
        <strain>C57BL/6J</strain>
        <tissue>Head</tissue>
    </source>
</reference>
<reference key="3">
    <citation type="journal article" date="2009" name="PLoS Biol.">
        <title>Lineage-specific biology revealed by a finished genome assembly of the mouse.</title>
        <authorList>
            <person name="Church D.M."/>
            <person name="Goodstadt L."/>
            <person name="Hillier L.W."/>
            <person name="Zody M.C."/>
            <person name="Goldstein S."/>
            <person name="She X."/>
            <person name="Bult C.J."/>
            <person name="Agarwala R."/>
            <person name="Cherry J.L."/>
            <person name="DiCuccio M."/>
            <person name="Hlavina W."/>
            <person name="Kapustin Y."/>
            <person name="Meric P."/>
            <person name="Maglott D."/>
            <person name="Birtle Z."/>
            <person name="Marques A.C."/>
            <person name="Graves T."/>
            <person name="Zhou S."/>
            <person name="Teague B."/>
            <person name="Potamousis K."/>
            <person name="Churas C."/>
            <person name="Place M."/>
            <person name="Herschleb J."/>
            <person name="Runnheim R."/>
            <person name="Forrest D."/>
            <person name="Amos-Landgraf J."/>
            <person name="Schwartz D.C."/>
            <person name="Cheng Z."/>
            <person name="Lindblad-Toh K."/>
            <person name="Eichler E.E."/>
            <person name="Ponting C.P."/>
        </authorList>
    </citation>
    <scope>NUCLEOTIDE SEQUENCE [LARGE SCALE GENOMIC DNA]</scope>
    <source>
        <strain>C57BL/6J</strain>
    </source>
</reference>
<reference key="4">
    <citation type="submission" date="2005-07" db="EMBL/GenBank/DDBJ databases">
        <authorList>
            <person name="Mural R.J."/>
            <person name="Adams M.D."/>
            <person name="Myers E.W."/>
            <person name="Smith H.O."/>
            <person name="Venter J.C."/>
        </authorList>
    </citation>
    <scope>NUCLEOTIDE SEQUENCE [LARGE SCALE GENOMIC DNA]</scope>
</reference>
<reference key="5">
    <citation type="journal article" date="2004" name="Genome Res.">
        <title>The status, quality, and expansion of the NIH full-length cDNA project: the Mammalian Gene Collection (MGC).</title>
        <authorList>
            <consortium name="The MGC Project Team"/>
        </authorList>
    </citation>
    <scope>NUCLEOTIDE SEQUENCE [LARGE SCALE MRNA]</scope>
    <source>
        <tissue>Olfactory epithelium</tissue>
    </source>
</reference>
<reference key="6">
    <citation type="journal article" date="2006" name="Oncogene">
        <title>Function and biological roles of the Dickkopf family of Wnt modulators.</title>
        <authorList>
            <person name="Niehrs C."/>
        </authorList>
    </citation>
    <scope>REVIEW OF THE DKK FAMILY</scope>
</reference>
<reference key="7">
    <citation type="journal article" date="2016" name="Dev. Biol.">
        <title>Bmp4-Msx1 signaling and Osr2 control tooth organogenesis through antagonistic regulation of secreted Wnt antagonists.</title>
        <authorList>
            <person name="Jia S."/>
            <person name="Kwon H.E."/>
            <person name="Lan Y."/>
            <person name="Zhou J."/>
            <person name="Liu H."/>
            <person name="Jiang R."/>
        </authorList>
    </citation>
    <scope>DEVELOPMENTAL STAGE</scope>
</reference>
<reference key="8">
    <citation type="journal article" date="2016" name="Sci. Rep.">
        <title>Kremen1 regulates mechanosensory hair cell development in the mammalian cochlea and the zebrafish lateral line.</title>
        <authorList>
            <person name="Mulvaney J.F."/>
            <person name="Thompkins C."/>
            <person name="Noda T."/>
            <person name="Nishimura K."/>
            <person name="Sun W.W."/>
            <person name="Lin S.Y."/>
            <person name="Coffin A."/>
            <person name="Dabdoub A."/>
        </authorList>
    </citation>
    <scope>DEVELOPMENTAL STAGE</scope>
</reference>
<reference key="9">
    <citation type="journal article" date="2008" name="J. Biol. Chem.">
        <title>Structural insight into the mechanisms of Wnt signaling antagonism by Dkk.</title>
        <authorList>
            <person name="Chen L."/>
            <person name="Wang K."/>
            <person name="Shao Y."/>
            <person name="Huang J."/>
            <person name="Li X."/>
            <person name="Shan J."/>
            <person name="Wu D."/>
            <person name="Zheng J.J."/>
        </authorList>
    </citation>
    <scope>STRUCTURE BY NMR OF 172-259</scope>
    <scope>SUBUNIT</scope>
    <scope>FUNCTION</scope>
    <scope>INTERACTION WITH LRP5 AND LRP6</scope>
    <scope>DISULFIDE BONDS</scope>
</reference>
<protein>
    <recommendedName>
        <fullName evidence="6">Dickkopf-related protein 2</fullName>
        <shortName>Dickkopf-2</shortName>
        <shortName>Dkk-2</shortName>
        <shortName>mDkk-2</shortName>
    </recommendedName>
</protein>
<accession>Q9QYZ8</accession>
<accession>Q8BFW0</accession>
<comment type="function">
    <text evidence="3">Antagonizes canonical Wnt signaling by inhibiting LRP5/6 interaction with Wnt and by forming a ternary complex with the transmembrane protein KREMEN that promotes internalization of LRP5/6. DKKs play an important role in vertebrate development, where they locally inhibit Wnt regulated processes such as antero-posterior axial patterning, limb development, somitogenesis and eye formation. In the adult, Dkks are implicated in bone formation and bone disease, cancer and Alzheimer disease.</text>
</comment>
<comment type="subunit">
    <text evidence="3">Interacts with LRP5 and LRP6.</text>
</comment>
<comment type="subcellular location">
    <subcellularLocation>
        <location>Secreted</location>
    </subcellularLocation>
</comment>
<comment type="developmental stage">
    <text evidence="4 5">Expressed in the oral mesenchyme lingual to the developing mandibular tooth buds at 13.5 dpc (PubMed:27713059). Expressed in the developing cochlea at 12.5 and 15.5 dpc (PubMed:27550540). Expressed in the forelimb at 13.5 dpc (PubMed:27550540).</text>
</comment>
<comment type="domain">
    <text evidence="3">The C-terminal cysteine-rich domain mediates interaction with LRP5 and LRP6.</text>
</comment>
<comment type="PTM">
    <text>May be proteolytically processed by a furin-like protease.</text>
</comment>
<comment type="similarity">
    <text evidence="6">Belongs to the dickkopf family.</text>
</comment>